<evidence type="ECO:0000255" key="1">
    <source>
        <dbReference type="HAMAP-Rule" id="MF_01145"/>
    </source>
</evidence>
<sequence>MKNIGRLAVTALIAVFIFSVTGCNMIEKTPEAIAKSTVAEVNGEKITRSDLDKDPNTIQLITQVKQQYGENYKENEDAVNTIKTQKEQILDDLITNKVVAQKAKELKLLPDETKLKSDMETQIAQLKKQNFNDDAEQFNTALKAQGFTEESFKAMFLSQLRTQQTLEKVTESISKNIKITDKEIEDYYNTNKSKYTEQPNKMHLAHILVKTEDEAKKVKKRLDDGEDFAKVAKEVSQDTASKDNGGDLGTVNYDNSGYDADFMAGALALKEGAISAPVKSSFGYHIIKCIKKEEYPVKALSAVKDQIKTQLESDKKNSLVSQKIQEWKKASTITKKEKNII</sequence>
<keyword id="KW-1003">Cell membrane</keyword>
<keyword id="KW-0413">Isomerase</keyword>
<keyword id="KW-0449">Lipoprotein</keyword>
<keyword id="KW-0472">Membrane</keyword>
<keyword id="KW-0564">Palmitate</keyword>
<keyword id="KW-0697">Rotamase</keyword>
<keyword id="KW-0732">Signal</keyword>
<comment type="function">
    <text evidence="1">Plays a major role in protein secretion by helping the post-translocational extracellular folding of several secreted proteins.</text>
</comment>
<comment type="catalytic activity">
    <reaction evidence="1">
        <text>[protein]-peptidylproline (omega=180) = [protein]-peptidylproline (omega=0)</text>
        <dbReference type="Rhea" id="RHEA:16237"/>
        <dbReference type="Rhea" id="RHEA-COMP:10747"/>
        <dbReference type="Rhea" id="RHEA-COMP:10748"/>
        <dbReference type="ChEBI" id="CHEBI:83833"/>
        <dbReference type="ChEBI" id="CHEBI:83834"/>
        <dbReference type="EC" id="5.2.1.8"/>
    </reaction>
</comment>
<comment type="subcellular location">
    <subcellularLocation>
        <location evidence="1">Cell membrane</location>
        <topology evidence="1">Lipid-anchor</topology>
    </subcellularLocation>
</comment>
<comment type="similarity">
    <text evidence="1">Belongs to the PrsA family.</text>
</comment>
<protein>
    <recommendedName>
        <fullName evidence="1">Foldase protein PrsA</fullName>
        <ecNumber evidence="1">5.2.1.8</ecNumber>
    </recommendedName>
</protein>
<proteinExistence type="inferred from homology"/>
<name>PRSA_CLOK1</name>
<reference key="1">
    <citation type="submission" date="2005-09" db="EMBL/GenBank/DDBJ databases">
        <title>Complete genome sequence of Clostridium kluyveri and comparative genomics of Clostridia species.</title>
        <authorList>
            <person name="Inui M."/>
            <person name="Nonaka H."/>
            <person name="Shinoda Y."/>
            <person name="Ikenaga Y."/>
            <person name="Abe M."/>
            <person name="Naito K."/>
            <person name="Vertes A.A."/>
            <person name="Yukawa H."/>
        </authorList>
    </citation>
    <scope>NUCLEOTIDE SEQUENCE [LARGE SCALE GENOMIC DNA]</scope>
    <source>
        <strain>NBRC 12016</strain>
    </source>
</reference>
<feature type="signal peptide" evidence="1">
    <location>
        <begin position="1"/>
        <end position="22"/>
    </location>
</feature>
<feature type="chain" id="PRO_1000164112" description="Foldase protein PrsA">
    <location>
        <begin position="23"/>
        <end position="341"/>
    </location>
</feature>
<feature type="domain" description="PpiC" evidence="1">
    <location>
        <begin position="199"/>
        <end position="291"/>
    </location>
</feature>
<feature type="lipid moiety-binding region" description="N-palmitoyl cysteine" evidence="1">
    <location>
        <position position="23"/>
    </location>
</feature>
<feature type="lipid moiety-binding region" description="S-diacylglycerol cysteine" evidence="1">
    <location>
        <position position="23"/>
    </location>
</feature>
<dbReference type="EC" id="5.2.1.8" evidence="1"/>
<dbReference type="EMBL" id="AP009049">
    <property type="protein sequence ID" value="BAH05179.1"/>
    <property type="molecule type" value="Genomic_DNA"/>
</dbReference>
<dbReference type="RefSeq" id="WP_011988749.1">
    <property type="nucleotide sequence ID" value="NC_011837.1"/>
</dbReference>
<dbReference type="SMR" id="B9DY54"/>
<dbReference type="KEGG" id="ckr:CKR_0128"/>
<dbReference type="HOGENOM" id="CLU_034646_5_2_9"/>
<dbReference type="Proteomes" id="UP000007969">
    <property type="component" value="Chromosome"/>
</dbReference>
<dbReference type="GO" id="GO:0005886">
    <property type="term" value="C:plasma membrane"/>
    <property type="evidence" value="ECO:0007669"/>
    <property type="project" value="UniProtKB-SubCell"/>
</dbReference>
<dbReference type="GO" id="GO:0003755">
    <property type="term" value="F:peptidyl-prolyl cis-trans isomerase activity"/>
    <property type="evidence" value="ECO:0007669"/>
    <property type="project" value="UniProtKB-UniRule"/>
</dbReference>
<dbReference type="GO" id="GO:0006457">
    <property type="term" value="P:protein folding"/>
    <property type="evidence" value="ECO:0007669"/>
    <property type="project" value="UniProtKB-UniRule"/>
</dbReference>
<dbReference type="Gene3D" id="3.10.50.40">
    <property type="match status" value="1"/>
</dbReference>
<dbReference type="Gene3D" id="1.10.4030.10">
    <property type="entry name" value="Porin chaperone SurA, peptide-binding domain"/>
    <property type="match status" value="1"/>
</dbReference>
<dbReference type="HAMAP" id="MF_01145">
    <property type="entry name" value="Foldase_PrsA"/>
    <property type="match status" value="1"/>
</dbReference>
<dbReference type="InterPro" id="IPR023059">
    <property type="entry name" value="Foldase_PrsA"/>
</dbReference>
<dbReference type="InterPro" id="IPR046357">
    <property type="entry name" value="PPIase_dom_sf"/>
</dbReference>
<dbReference type="InterPro" id="IPR000297">
    <property type="entry name" value="PPIase_PpiC"/>
</dbReference>
<dbReference type="InterPro" id="IPR023058">
    <property type="entry name" value="PPIase_PpiC_CS"/>
</dbReference>
<dbReference type="InterPro" id="IPR050245">
    <property type="entry name" value="PrsA_foldase"/>
</dbReference>
<dbReference type="InterPro" id="IPR027304">
    <property type="entry name" value="Trigger_fact/SurA_dom_sf"/>
</dbReference>
<dbReference type="NCBIfam" id="NF000809">
    <property type="entry name" value="PRK00059.1"/>
    <property type="match status" value="1"/>
</dbReference>
<dbReference type="PANTHER" id="PTHR47245:SF1">
    <property type="entry name" value="FOLDASE PROTEIN PRSA"/>
    <property type="match status" value="1"/>
</dbReference>
<dbReference type="PANTHER" id="PTHR47245">
    <property type="entry name" value="PEPTIDYLPROLYL ISOMERASE"/>
    <property type="match status" value="1"/>
</dbReference>
<dbReference type="Pfam" id="PF13616">
    <property type="entry name" value="Rotamase_3"/>
    <property type="match status" value="1"/>
</dbReference>
<dbReference type="Pfam" id="PF13624">
    <property type="entry name" value="SurA_N_3"/>
    <property type="match status" value="1"/>
</dbReference>
<dbReference type="SUPFAM" id="SSF54534">
    <property type="entry name" value="FKBP-like"/>
    <property type="match status" value="1"/>
</dbReference>
<dbReference type="SUPFAM" id="SSF109998">
    <property type="entry name" value="Triger factor/SurA peptide-binding domain-like"/>
    <property type="match status" value="1"/>
</dbReference>
<dbReference type="PROSITE" id="PS01096">
    <property type="entry name" value="PPIC_PPIASE_1"/>
    <property type="match status" value="1"/>
</dbReference>
<dbReference type="PROSITE" id="PS50198">
    <property type="entry name" value="PPIC_PPIASE_2"/>
    <property type="match status" value="1"/>
</dbReference>
<dbReference type="PROSITE" id="PS51257">
    <property type="entry name" value="PROKAR_LIPOPROTEIN"/>
    <property type="match status" value="1"/>
</dbReference>
<accession>B9DY54</accession>
<gene>
    <name evidence="1" type="primary">prsA</name>
    <name type="ordered locus">CKR_0128</name>
</gene>
<organism>
    <name type="scientific">Clostridium kluyveri (strain NBRC 12016)</name>
    <dbReference type="NCBI Taxonomy" id="583346"/>
    <lineage>
        <taxon>Bacteria</taxon>
        <taxon>Bacillati</taxon>
        <taxon>Bacillota</taxon>
        <taxon>Clostridia</taxon>
        <taxon>Eubacteriales</taxon>
        <taxon>Clostridiaceae</taxon>
        <taxon>Clostridium</taxon>
    </lineage>
</organism>